<organism>
    <name type="scientific">Orientia tsutsugamushi (strain Ikeda)</name>
    <name type="common">Rickettsia tsutsugamushi</name>
    <dbReference type="NCBI Taxonomy" id="334380"/>
    <lineage>
        <taxon>Bacteria</taxon>
        <taxon>Pseudomonadati</taxon>
        <taxon>Pseudomonadota</taxon>
        <taxon>Alphaproteobacteria</taxon>
        <taxon>Rickettsiales</taxon>
        <taxon>Rickettsiaceae</taxon>
        <taxon>Rickettsieae</taxon>
        <taxon>Orientia</taxon>
    </lineage>
</organism>
<evidence type="ECO:0000255" key="1">
    <source>
        <dbReference type="HAMAP-Rule" id="MF_00294"/>
    </source>
</evidence>
<evidence type="ECO:0000305" key="2"/>
<accession>B3CRY6</accession>
<feature type="chain" id="PRO_1000115144" description="Large ribosomal subunit protein bL33">
    <location>
        <begin position="1"/>
        <end position="56"/>
    </location>
</feature>
<comment type="similarity">
    <text evidence="1">Belongs to the bacterial ribosomal protein bL33 family.</text>
</comment>
<reference key="1">
    <citation type="journal article" date="2008" name="DNA Res.">
        <title>The whole-genome sequencing of the obligate intracellular bacterium Orientia tsutsugamushi revealed massive gene amplification during reductive genome evolution.</title>
        <authorList>
            <person name="Nakayama K."/>
            <person name="Yamashita A."/>
            <person name="Kurokawa K."/>
            <person name="Morimoto T."/>
            <person name="Ogawa M."/>
            <person name="Fukuhara M."/>
            <person name="Urakami H."/>
            <person name="Ohnishi M."/>
            <person name="Uchiyama I."/>
            <person name="Ogura Y."/>
            <person name="Ooka T."/>
            <person name="Oshima K."/>
            <person name="Tamura A."/>
            <person name="Hattori M."/>
            <person name="Hayashi T."/>
        </authorList>
    </citation>
    <scope>NUCLEOTIDE SEQUENCE [LARGE SCALE GENOMIC DNA]</scope>
    <source>
        <strain>Ikeda</strain>
    </source>
</reference>
<protein>
    <recommendedName>
        <fullName evidence="1">Large ribosomal subunit protein bL33</fullName>
    </recommendedName>
    <alternativeName>
        <fullName evidence="2">50S ribosomal protein L33</fullName>
    </alternativeName>
</protein>
<name>RL33_ORITI</name>
<proteinExistence type="inferred from homology"/>
<keyword id="KW-0687">Ribonucleoprotein</keyword>
<keyword id="KW-0689">Ribosomal protein</keyword>
<dbReference type="EMBL" id="AP008981">
    <property type="protein sequence ID" value="BAG40243.1"/>
    <property type="molecule type" value="Genomic_DNA"/>
</dbReference>
<dbReference type="RefSeq" id="WP_012461396.1">
    <property type="nucleotide sequence ID" value="NC_010793.1"/>
</dbReference>
<dbReference type="SMR" id="B3CRY6"/>
<dbReference type="GeneID" id="89459069"/>
<dbReference type="KEGG" id="ott:OTT_0785"/>
<dbReference type="HOGENOM" id="CLU_190949_1_0_5"/>
<dbReference type="OrthoDB" id="21586at2"/>
<dbReference type="Proteomes" id="UP000001033">
    <property type="component" value="Chromosome"/>
</dbReference>
<dbReference type="GO" id="GO:0005737">
    <property type="term" value="C:cytoplasm"/>
    <property type="evidence" value="ECO:0007669"/>
    <property type="project" value="UniProtKB-ARBA"/>
</dbReference>
<dbReference type="GO" id="GO:0015934">
    <property type="term" value="C:large ribosomal subunit"/>
    <property type="evidence" value="ECO:0007669"/>
    <property type="project" value="TreeGrafter"/>
</dbReference>
<dbReference type="GO" id="GO:0003735">
    <property type="term" value="F:structural constituent of ribosome"/>
    <property type="evidence" value="ECO:0007669"/>
    <property type="project" value="InterPro"/>
</dbReference>
<dbReference type="GO" id="GO:0006412">
    <property type="term" value="P:translation"/>
    <property type="evidence" value="ECO:0007669"/>
    <property type="project" value="UniProtKB-UniRule"/>
</dbReference>
<dbReference type="Gene3D" id="2.20.28.120">
    <property type="entry name" value="Ribosomal protein L33"/>
    <property type="match status" value="1"/>
</dbReference>
<dbReference type="HAMAP" id="MF_00294">
    <property type="entry name" value="Ribosomal_bL33"/>
    <property type="match status" value="1"/>
</dbReference>
<dbReference type="InterPro" id="IPR001705">
    <property type="entry name" value="Ribosomal_bL33"/>
</dbReference>
<dbReference type="InterPro" id="IPR018264">
    <property type="entry name" value="Ribosomal_bL33_CS"/>
</dbReference>
<dbReference type="InterPro" id="IPR038584">
    <property type="entry name" value="Ribosomal_bL33_sf"/>
</dbReference>
<dbReference type="InterPro" id="IPR011332">
    <property type="entry name" value="Ribosomal_zn-bd"/>
</dbReference>
<dbReference type="NCBIfam" id="NF001860">
    <property type="entry name" value="PRK00595.1"/>
    <property type="match status" value="1"/>
</dbReference>
<dbReference type="NCBIfam" id="TIGR01023">
    <property type="entry name" value="rpmG_bact"/>
    <property type="match status" value="1"/>
</dbReference>
<dbReference type="PANTHER" id="PTHR15238">
    <property type="entry name" value="54S RIBOSOMAL PROTEIN L39, MITOCHONDRIAL"/>
    <property type="match status" value="1"/>
</dbReference>
<dbReference type="PANTHER" id="PTHR15238:SF1">
    <property type="entry name" value="LARGE RIBOSOMAL SUBUNIT PROTEIN BL33M"/>
    <property type="match status" value="1"/>
</dbReference>
<dbReference type="Pfam" id="PF00471">
    <property type="entry name" value="Ribosomal_L33"/>
    <property type="match status" value="1"/>
</dbReference>
<dbReference type="SUPFAM" id="SSF57829">
    <property type="entry name" value="Zn-binding ribosomal proteins"/>
    <property type="match status" value="1"/>
</dbReference>
<dbReference type="PROSITE" id="PS00582">
    <property type="entry name" value="RIBOSOMAL_L33"/>
    <property type="match status" value="1"/>
</dbReference>
<sequence length="56" mass="6590">MSRKKKKVLVKLVSSAGTGVFWVKQRNPKTQTEKLSFRKYDPKVRKHVQFTEAKIK</sequence>
<gene>
    <name evidence="1" type="primary">rpmG</name>
    <name type="ordered locus">OTT_0785</name>
</gene>